<protein>
    <recommendedName>
        <fullName evidence="13">Delta(6)-protoilludene synthase</fullName>
        <ecNumber evidence="4">4.2.3.135</ecNumber>
    </recommendedName>
    <alternativeName>
        <fullName evidence="13">Melleolides biosynthesis cluster protein PRO1</fullName>
    </alternativeName>
</protein>
<comment type="function">
    <text evidence="2 4">Delta(6)-protoilludene synthase, part of the gene cluster that mediates the biosynthesis of melleolides, a range of antifungal and phytotoxic polyketide derivatives composed of an orsellinic acid (OA) moiety esterified to various sesquiterpene alcohols (PubMed:21148562). The first step in melleolides biosynthesis is performed by the delta(6)-protoilludene synthase PRO1 which catalyzes the cyclization of farnesyl diphosphate to protoilludene (PubMed:21148562). The orsellinic acid synthase armB produces OA by condensing acetyl-CoA with 3 malonyl-CoA units in a three-round chain elongation reaction folowed by a C2-C7 ring closure (By similarity). ArmB further catalyzes the trans-esterification of OA to the various sesquiterpene alcohols resulting from the hydroxylation of protoilludene (By similarity). The melleolides cluster also includes 5 cytochrome P450 monooxygenases, 4 NAD(+)-dependent oxidoreductases, one flavin-dependent oxidoreductase, and one O-methyltransferase (By similarity). The cytochrome P450 monooxygenases may be involved in protoilludene hydroxylation to elaborate melleolides with multiple alcohol groups, such as melleolide D, which carries alcohol functionalities at C-4, C-5, C-10, and C-13 (By similarity). The role of the NAD(+)-dependent enzymes remains unknown (By similarity). Numerous melleolides, including arnamial, show 5'-O-methylation of the aromatic moiety which may be catalyzed by the methyltransferase encoded in the cluster (By similarity). The flavin-dependent oxidoreductase might represent the dehydrogenase yielding the aldehyde in position 1 of arnamial and other melleolides (By similarity). Finally, several halogenases, localized outside of the cluster, are able to catalyze the transfer of a single chlorine atom to the melleolide backbone, resulting in a 6'-chloromelleolide product (By similarity).</text>
</comment>
<comment type="catalytic activity">
    <reaction evidence="4">
        <text>(2E,6E)-farnesyl diphosphate = Delta(6)-protoilludene + diphosphate</text>
        <dbReference type="Rhea" id="RHEA:34695"/>
        <dbReference type="ChEBI" id="CHEBI:33019"/>
        <dbReference type="ChEBI" id="CHEBI:68655"/>
        <dbReference type="ChEBI" id="CHEBI:175763"/>
        <dbReference type="EC" id="4.2.3.135"/>
    </reaction>
</comment>
<comment type="cofactor">
    <cofactor evidence="15">
        <name>Mg(2+)</name>
        <dbReference type="ChEBI" id="CHEBI:18420"/>
    </cofactor>
    <text evidence="15">Binds 3 Mg(2+) ions per subunit.</text>
</comment>
<comment type="biophysicochemical properties">
    <kinetics>
        <KM evidence="4">0.53 uM for farnesyl diphosphate</KM>
    </kinetics>
</comment>
<comment type="pathway">
    <text evidence="4">Secondary metabolite biosynthesis.</text>
</comment>
<comment type="subunit">
    <text evidence="4">Monomer.</text>
</comment>
<comment type="domain">
    <text evidence="1">The Asp-Asp-Xaa-Xaa-Asp/Glu (DDXXD/E) motif is important for the catalytic activity, presumably through binding to Mg(2+).</text>
</comment>
<comment type="biotechnology">
    <text evidence="5 6 7 8 9 11">Melleolide sesquiterpene aryl esters are cytotoxic secondary products with anti-cancer potential (PubMed:21376582, PubMed:26952552). Armillaridin shows therapeutic and radiosensitizing effects on human esophageal cancer cells (PubMed:23864890). Armillaridin induces autophagy-associated cell death in human chronic myelogenous leukemia as well as of hepatocellular carcinoma cells (PubMed:27592257, PubMed:31488037). Armillaridin can also inhibit the differentiation and activation of human macrophages and thus might have potential to be developed as a biological response modifier for inflammatory diseases (PubMed:25746621).</text>
</comment>
<comment type="miscellaneous">
    <text evidence="10 12 16">Armillaria species are both devastating forest pathogens and some of the largest and oldest terrestrial organisms on Earth (Probable) (PubMed:31746694). They forage for hosts and achieve immense colony sizes via rhizomorphs, root-like multicellular structures of clonal dispersal (Probable). One genetic Armillaria gallica individual localized in Michigan's Upper Peninsula stands out as exceptionally large, covering hundreds of tree root systems over approximately 75 hectares of the forest floor (PubMed:30963893). Based on observed growth rates of the fungus, the minimum age of this large individual can be estimated as 2500 years (PubMed:30963893).</text>
</comment>
<comment type="similarity">
    <text evidence="14">Belongs to the terpene synthase family.</text>
</comment>
<comment type="online information" name="Protein Spotlight">
    <link uri="https://www.proteinspotlight.org/back_issues/225/"/>
    <text>Beneath us - Issue 225 of May 2020</text>
</comment>
<gene>
    <name evidence="13" type="primary">PRO1</name>
    <name type="ORF">ARMGADRAFT_1000221</name>
</gene>
<evidence type="ECO:0000250" key="1"/>
<evidence type="ECO:0000250" key="2">
    <source>
        <dbReference type="UniProtKB" id="I3ZNU9"/>
    </source>
</evidence>
<evidence type="ECO:0000250" key="3">
    <source>
        <dbReference type="UniProtKB" id="Q9UR08"/>
    </source>
</evidence>
<evidence type="ECO:0000269" key="4">
    <source>
    </source>
</evidence>
<evidence type="ECO:0000269" key="5">
    <source>
    </source>
</evidence>
<evidence type="ECO:0000269" key="6">
    <source>
    </source>
</evidence>
<evidence type="ECO:0000269" key="7">
    <source>
    </source>
</evidence>
<evidence type="ECO:0000269" key="8">
    <source>
    </source>
</evidence>
<evidence type="ECO:0000269" key="9">
    <source>
    </source>
</evidence>
<evidence type="ECO:0000269" key="10">
    <source>
    </source>
</evidence>
<evidence type="ECO:0000269" key="11">
    <source>
    </source>
</evidence>
<evidence type="ECO:0000269" key="12">
    <source>
    </source>
</evidence>
<evidence type="ECO:0000303" key="13">
    <source>
    </source>
</evidence>
<evidence type="ECO:0000305" key="14"/>
<evidence type="ECO:0000305" key="15">
    <source>
    </source>
</evidence>
<evidence type="ECO:0000305" key="16">
    <source>
    </source>
</evidence>
<sequence length="345" mass="39793">MSQRIFLPDTLANWQWPRHLNPHYAEVKKASAAWAKSFRAFQTKAQEAFDRCDFNLLASFAYPLADEARLRSGCDLMNLFFVIDEYSDVATEEEVRAQKDIVMDAIRNTEKPRPAGEWIGGEVSRQFWDLAKKTASTQAQKRFIDTFDEYLESVVQQAADRNNSHVRGIESYLEVRRNTIGAKPSFALLEFDMQLPDEVINHPVIKELENSCIDMLCLGNDVVSYNLEQARDDDGHNIVTIAMNELRTDVAGAMIWVDEYHKQLESRFMENFKKVPRWGGPIDLQVARYCDGLGNWVRANDQWSFESERYFGKKGPEIIQRRWITLMPKMVSEELGPQIVDGSHL</sequence>
<name>PRO1_ARMGA</name>
<proteinExistence type="evidence at protein level"/>
<reference key="1">
    <citation type="journal article" date="2011" name="J. Biol. Chem.">
        <title>Cloning and characterization of an Armillaria gallica cDNA encoding protoilludene synthase, which catalyzes the first committed step in the synthesis of antimicrobial melleolides.</title>
        <authorList>
            <person name="Engels B."/>
            <person name="Heinig U."/>
            <person name="Grothe T."/>
            <person name="Stadler M."/>
            <person name="Jennewein S."/>
        </authorList>
    </citation>
    <scope>NUCLEOTIDE SEQUENCE [MRNA]</scope>
    <scope>FUNCTION</scope>
    <scope>CATALYTIC ACTIVITY</scope>
    <scope>COFACTOR</scope>
    <scope>BIOPHYSICOCHEMICAL PROPERTIES</scope>
    <scope>SUBUNIT</scope>
    <scope>PATHWAY</scope>
    <source>
        <strain>FU02472</strain>
    </source>
</reference>
<reference key="2">
    <citation type="journal article" date="2017" name="Nat. Ecol. Evol.">
        <title>Genome expansion and lineage-specific genetic innovations in the forest pathogenic fungi Armillaria.</title>
        <authorList>
            <person name="Sipos G."/>
            <person name="Prasanna A.N."/>
            <person name="Walter M.C."/>
            <person name="O'Connor E."/>
            <person name="Balint B."/>
            <person name="Krizsan K."/>
            <person name="Kiss B."/>
            <person name="Hess J."/>
            <person name="Varga T."/>
            <person name="Slot J."/>
            <person name="Riley R."/>
            <person name="Boka B."/>
            <person name="Rigling D."/>
            <person name="Barry K."/>
            <person name="Lee J."/>
            <person name="Mihaltcheva S."/>
            <person name="LaButti K."/>
            <person name="Lipzen A."/>
            <person name="Waldron R."/>
            <person name="Moloney N.M."/>
            <person name="Sperisen C."/>
            <person name="Kredics L."/>
            <person name="Vagvoelgyi C."/>
            <person name="Patrignani A."/>
            <person name="Fitzpatrick D."/>
            <person name="Nagy I."/>
            <person name="Doyle S."/>
            <person name="Anderson J.B."/>
            <person name="Grigoriev I.V."/>
            <person name="Gueldener U."/>
            <person name="Muensterkoetter M."/>
            <person name="Nagy L.G."/>
        </authorList>
    </citation>
    <scope>NUCLEOTIDE SEQUENCE [LARGE SCALE GENOMIC DNA]</scope>
    <source>
        <strain>Ar21-2</strain>
    </source>
</reference>
<reference key="3">
    <citation type="journal article" date="2011" name="Bioorg. Med. Chem. Lett.">
        <title>In vitro cytotoxicity of melleolide antibiotics: structural and mechanistic aspects.</title>
        <authorList>
            <person name="Bohnert M."/>
            <person name="Miethbauer S."/>
            <person name="Dahse H.M."/>
            <person name="Ziemen J."/>
            <person name="Nett M."/>
            <person name="Hoffmeister D."/>
        </authorList>
    </citation>
    <scope>BIOTECHNOLOGY</scope>
</reference>
<reference key="4">
    <citation type="journal article" date="2013" name="Evid. Based Complement Alternat. Med.">
        <title>Therapeutic and radiosensitizing effects of armillaridin on human esophageal cancer cells.</title>
        <authorList>
            <person name="Chi C.W."/>
            <person name="Chen C.C."/>
            <person name="Chen Y.J."/>
        </authorList>
    </citation>
    <scope>BIOTECHNOLOGY</scope>
</reference>
<reference key="5">
    <citation type="journal article" date="2015" name="Int. J. Med. Mushrooms">
        <title>Armillaridin, a honey medicinal mushroom, Armillaria mellea (higher basidiomycetes) component, inhibits differentiation and activation of human macrophages.</title>
        <authorList>
            <person name="Liu T.P."/>
            <person name="Chen C.C."/>
            <person name="Shiao P.Y."/>
            <person name="Shieh H.R."/>
            <person name="Chen Y.Y."/>
            <person name="Chen Y.J."/>
        </authorList>
    </citation>
    <scope>BIOTECHNOLOGY</scope>
</reference>
<reference key="6">
    <citation type="journal article" date="2016" name="J. Ethnopharmacol.">
        <title>Structure, cytotoxic activity and mechanism of protoilludane sesquiterpene aryl esters from the mycelium of Armillaria mellea.</title>
        <authorList>
            <person name="Li Z."/>
            <person name="Wang Y."/>
            <person name="Jiang B."/>
            <person name="Li W."/>
            <person name="Zheng L."/>
            <person name="Yang X."/>
            <person name="Bao Y."/>
            <person name="Sun L."/>
            <person name="Huang Y."/>
            <person name="Li Y."/>
        </authorList>
    </citation>
    <scope>BIOTECHNOLOGY</scope>
</reference>
<reference key="7">
    <citation type="journal article" date="2016" name="Tumor Biol.">
        <title>Armillaridin induces autophagy-associated cell death in human chronic myelogenous leukemia K562 cells.</title>
        <authorList>
            <person name="Chang W.H."/>
            <person name="Huang H.L."/>
            <person name="Huang W.P."/>
            <person name="Chen C.C."/>
            <person name="Chen Y.J."/>
        </authorList>
    </citation>
    <scope>BIOTECHNOLOGY</scope>
</reference>
<reference key="8">
    <citation type="journal article" date="2018" name="Curr. Biol.">
        <title>Armillaria.</title>
        <authorList>
            <person name="Sipos G."/>
            <person name="Anderson J.B."/>
            <person name="Nagy L.G."/>
        </authorList>
    </citation>
    <scope>MISCELLANEOUS</scope>
</reference>
<reference key="9">
    <citation type="journal article" date="2018" name="Proc. R. Soc. B">
        <title>Clonal evolution and genome stability in a 2500-year-old fungal individual.</title>
        <authorList>
            <person name="Anderson J.B."/>
            <person name="Bruhn J.N."/>
            <person name="Kasimer D."/>
            <person name="Wang H."/>
            <person name="Rodrigue N."/>
            <person name="Smith M.L."/>
        </authorList>
    </citation>
    <scope>MISCELLANEOUS</scope>
</reference>
<reference key="10">
    <citation type="journal article" date="2019" name="Am. J. Chin. Med.">
        <title>Induction of autophagic death of human hepatocellular carcinoma cells by armillaridin from Armillaria mellea.</title>
        <authorList>
            <person name="Leu Y.S."/>
            <person name="Chen Y.J."/>
            <person name="Chen C.C."/>
            <person name="Huang H.L."/>
        </authorList>
    </citation>
    <scope>BIOTECHNOLOGY</scope>
</reference>
<reference key="11">
    <citation type="journal article" date="2020" name="Plant Dis.">
        <title>Susceptibility of garden trees and shrubs to Armillaria root rot.</title>
        <authorList>
            <person name="Cromey M.G."/>
            <person name="Drakulic J."/>
            <person name="Beal E.J."/>
            <person name="Waghorn I.A.G."/>
            <person name="Perry J.N."/>
            <person name="Clover G.R.G."/>
        </authorList>
    </citation>
    <scope>MISCELLANEOUS</scope>
</reference>
<dbReference type="EC" id="4.2.3.135" evidence="4"/>
<dbReference type="EMBL" id="KC852198">
    <property type="protein sequence ID" value="AGR34199.1"/>
    <property type="molecule type" value="mRNA"/>
</dbReference>
<dbReference type="EMBL" id="KZ293696">
    <property type="protein sequence ID" value="PBK84744.1"/>
    <property type="molecule type" value="Genomic_DNA"/>
</dbReference>
<dbReference type="SMR" id="P0DL13"/>
<dbReference type="KEGG" id="ag:AGR34199"/>
<dbReference type="InParanoid" id="P0DL13"/>
<dbReference type="OMA" id="ESRFMEN"/>
<dbReference type="OrthoDB" id="6486656at2759"/>
<dbReference type="BioCyc" id="MetaCyc:MONOMER-20282"/>
<dbReference type="SABIO-RK" id="P0DL13"/>
<dbReference type="Proteomes" id="UP000217790">
    <property type="component" value="Unassembled WGS sequence"/>
</dbReference>
<dbReference type="GO" id="GO:0000287">
    <property type="term" value="F:magnesium ion binding"/>
    <property type="evidence" value="ECO:0000314"/>
    <property type="project" value="UniProtKB"/>
</dbReference>
<dbReference type="GO" id="GO:0010333">
    <property type="term" value="F:terpene synthase activity"/>
    <property type="evidence" value="ECO:0000314"/>
    <property type="project" value="UniProtKB"/>
</dbReference>
<dbReference type="GO" id="GO:0016114">
    <property type="term" value="P:terpenoid biosynthetic process"/>
    <property type="evidence" value="ECO:0000314"/>
    <property type="project" value="UniProtKB"/>
</dbReference>
<dbReference type="FunFam" id="1.10.600.10:FF:000060">
    <property type="entry name" value="Terpenoid synthase"/>
    <property type="match status" value="1"/>
</dbReference>
<dbReference type="Gene3D" id="1.10.600.10">
    <property type="entry name" value="Farnesyl Diphosphate Synthase"/>
    <property type="match status" value="1"/>
</dbReference>
<dbReference type="InterPro" id="IPR008949">
    <property type="entry name" value="Isoprenoid_synthase_dom_sf"/>
</dbReference>
<dbReference type="InterPro" id="IPR034686">
    <property type="entry name" value="Terpene_cyclase-like_2"/>
</dbReference>
<dbReference type="PANTHER" id="PTHR35201:SF4">
    <property type="entry name" value="BETA-PINACENE SYNTHASE-RELATED"/>
    <property type="match status" value="1"/>
</dbReference>
<dbReference type="PANTHER" id="PTHR35201">
    <property type="entry name" value="TERPENE SYNTHASE"/>
    <property type="match status" value="1"/>
</dbReference>
<dbReference type="Pfam" id="PF19086">
    <property type="entry name" value="Terpene_syn_C_2"/>
    <property type="match status" value="1"/>
</dbReference>
<dbReference type="SFLD" id="SFLDS00005">
    <property type="entry name" value="Isoprenoid_Synthase_Type_I"/>
    <property type="match status" value="1"/>
</dbReference>
<dbReference type="SFLD" id="SFLDG01020">
    <property type="entry name" value="Terpene_Cyclase_Like_2"/>
    <property type="match status" value="1"/>
</dbReference>
<dbReference type="SUPFAM" id="SSF48576">
    <property type="entry name" value="Terpenoid synthases"/>
    <property type="match status" value="1"/>
</dbReference>
<keyword id="KW-0456">Lyase</keyword>
<keyword id="KW-0460">Magnesium</keyword>
<keyword id="KW-0479">Metal-binding</keyword>
<keyword id="KW-1185">Reference proteome</keyword>
<keyword id="KW-0843">Virulence</keyword>
<organism>
    <name type="scientific">Armillaria gallica</name>
    <name type="common">Bulbous honey fungus</name>
    <name type="synonym">Armillaria bulbosa</name>
    <dbReference type="NCBI Taxonomy" id="47427"/>
    <lineage>
        <taxon>Eukaryota</taxon>
        <taxon>Fungi</taxon>
        <taxon>Dikarya</taxon>
        <taxon>Basidiomycota</taxon>
        <taxon>Agaricomycotina</taxon>
        <taxon>Agaricomycetes</taxon>
        <taxon>Agaricomycetidae</taxon>
        <taxon>Agaricales</taxon>
        <taxon>Marasmiineae</taxon>
        <taxon>Physalacriaceae</taxon>
        <taxon>Armillaria</taxon>
    </lineage>
</organism>
<accession>P0DL13</accession>
<accession>A0A2H3CTI0</accession>
<accession>S5LSQ7</accession>
<feature type="chain" id="PRO_0000422215" description="Delta(6)-protoilludene synthase">
    <location>
        <begin position="1"/>
        <end position="345"/>
    </location>
</feature>
<feature type="short sequence motif" description="DDXXD motif" evidence="14">
    <location>
        <begin position="84"/>
        <end position="88"/>
    </location>
</feature>
<feature type="binding site" evidence="3">
    <location>
        <position position="84"/>
    </location>
    <ligand>
        <name>Mg(2+)</name>
        <dbReference type="ChEBI" id="CHEBI:18420"/>
        <label>1</label>
    </ligand>
</feature>
<feature type="binding site" evidence="3">
    <location>
        <position position="84"/>
    </location>
    <ligand>
        <name>Mg(2+)</name>
        <dbReference type="ChEBI" id="CHEBI:18420"/>
        <label>2</label>
    </ligand>
</feature>
<feature type="binding site" evidence="3">
    <location>
        <position position="220"/>
    </location>
    <ligand>
        <name>Mg(2+)</name>
        <dbReference type="ChEBI" id="CHEBI:18420"/>
        <label>3</label>
    </ligand>
</feature>
<feature type="binding site" evidence="3">
    <location>
        <position position="224"/>
    </location>
    <ligand>
        <name>Mg(2+)</name>
        <dbReference type="ChEBI" id="CHEBI:18420"/>
        <label>3</label>
    </ligand>
</feature>
<feature type="binding site" evidence="3">
    <location>
        <position position="228"/>
    </location>
    <ligand>
        <name>Mg(2+)</name>
        <dbReference type="ChEBI" id="CHEBI:18420"/>
        <label>3</label>
    </ligand>
</feature>
<feature type="binding site" evidence="3">
    <location>
        <position position="309"/>
    </location>
    <ligand>
        <name>(2E,6E)-farnesyl diphosphate</name>
        <dbReference type="ChEBI" id="CHEBI:175763"/>
    </ligand>
</feature>
<feature type="binding site" evidence="3">
    <location>
        <position position="310"/>
    </location>
    <ligand>
        <name>(2E,6E)-farnesyl diphosphate</name>
        <dbReference type="ChEBI" id="CHEBI:175763"/>
    </ligand>
</feature>
<feature type="sequence variant" description="In strain: FU02472.">
    <original>A</original>
    <variation>S</variation>
    <location>
        <position position="90"/>
    </location>
</feature>
<feature type="sequence variant" description="In strain: FU02472.">
    <original>N</original>
    <variation>K</variation>
    <location>
        <position position="210"/>
    </location>
</feature>
<feature type="sequence variant" description="In strain: FU02472.">
    <original>S</original>
    <variation>F</variation>
    <location>
        <position position="343"/>
    </location>
</feature>